<organism>
    <name type="scientific">Acinetobacter baumannii (strain SDF)</name>
    <dbReference type="NCBI Taxonomy" id="509170"/>
    <lineage>
        <taxon>Bacteria</taxon>
        <taxon>Pseudomonadati</taxon>
        <taxon>Pseudomonadota</taxon>
        <taxon>Gammaproteobacteria</taxon>
        <taxon>Moraxellales</taxon>
        <taxon>Moraxellaceae</taxon>
        <taxon>Acinetobacter</taxon>
        <taxon>Acinetobacter calcoaceticus/baumannii complex</taxon>
    </lineage>
</organism>
<proteinExistence type="inferred from homology"/>
<feature type="chain" id="PRO_1000096916" description="Protoheme IX farnesyltransferase">
    <location>
        <begin position="1"/>
        <end position="292"/>
    </location>
</feature>
<feature type="transmembrane region" description="Helical" evidence="1">
    <location>
        <begin position="13"/>
        <end position="33"/>
    </location>
</feature>
<feature type="transmembrane region" description="Helical" evidence="1">
    <location>
        <begin position="35"/>
        <end position="55"/>
    </location>
</feature>
<feature type="transmembrane region" description="Helical" evidence="1">
    <location>
        <begin position="84"/>
        <end position="104"/>
    </location>
</feature>
<feature type="transmembrane region" description="Helical" evidence="1">
    <location>
        <begin position="106"/>
        <end position="126"/>
    </location>
</feature>
<feature type="transmembrane region" description="Helical" evidence="1">
    <location>
        <begin position="135"/>
        <end position="155"/>
    </location>
</feature>
<feature type="transmembrane region" description="Helical" evidence="1">
    <location>
        <begin position="161"/>
        <end position="181"/>
    </location>
</feature>
<feature type="transmembrane region" description="Helical" evidence="1">
    <location>
        <begin position="206"/>
        <end position="226"/>
    </location>
</feature>
<feature type="transmembrane region" description="Helical" evidence="1">
    <location>
        <begin position="231"/>
        <end position="251"/>
    </location>
</feature>
<feature type="transmembrane region" description="Helical" evidence="1">
    <location>
        <begin position="263"/>
        <end position="283"/>
    </location>
</feature>
<gene>
    <name evidence="1" type="primary">cyoE</name>
    <name type="ordered locus">ABSDF1571</name>
</gene>
<dbReference type="EC" id="2.5.1.141" evidence="1"/>
<dbReference type="EMBL" id="CU468230">
    <property type="protein sequence ID" value="CAP00911.1"/>
    <property type="molecule type" value="Genomic_DNA"/>
</dbReference>
<dbReference type="SMR" id="B0VM11"/>
<dbReference type="KEGG" id="abm:ABSDF1571"/>
<dbReference type="HOGENOM" id="CLU_029631_0_0_6"/>
<dbReference type="UniPathway" id="UPA00834">
    <property type="reaction ID" value="UER00712"/>
</dbReference>
<dbReference type="Proteomes" id="UP000001741">
    <property type="component" value="Chromosome"/>
</dbReference>
<dbReference type="GO" id="GO:0005886">
    <property type="term" value="C:plasma membrane"/>
    <property type="evidence" value="ECO:0007669"/>
    <property type="project" value="UniProtKB-SubCell"/>
</dbReference>
<dbReference type="GO" id="GO:0008495">
    <property type="term" value="F:protoheme IX farnesyltransferase activity"/>
    <property type="evidence" value="ECO:0007669"/>
    <property type="project" value="UniProtKB-UniRule"/>
</dbReference>
<dbReference type="GO" id="GO:0048034">
    <property type="term" value="P:heme O biosynthetic process"/>
    <property type="evidence" value="ECO:0007669"/>
    <property type="project" value="UniProtKB-UniRule"/>
</dbReference>
<dbReference type="CDD" id="cd13957">
    <property type="entry name" value="PT_UbiA_Cox10"/>
    <property type="match status" value="1"/>
</dbReference>
<dbReference type="FunFam" id="1.10.357.140:FF:000001">
    <property type="entry name" value="Protoheme IX farnesyltransferase"/>
    <property type="match status" value="1"/>
</dbReference>
<dbReference type="Gene3D" id="1.10.357.140">
    <property type="entry name" value="UbiA prenyltransferase"/>
    <property type="match status" value="1"/>
</dbReference>
<dbReference type="HAMAP" id="MF_00154">
    <property type="entry name" value="CyoE_CtaB"/>
    <property type="match status" value="1"/>
</dbReference>
<dbReference type="InterPro" id="IPR006369">
    <property type="entry name" value="Protohaem_IX_farnesylTrfase"/>
</dbReference>
<dbReference type="InterPro" id="IPR000537">
    <property type="entry name" value="UbiA_prenyltransferase"/>
</dbReference>
<dbReference type="InterPro" id="IPR030470">
    <property type="entry name" value="UbiA_prenylTrfase_CS"/>
</dbReference>
<dbReference type="InterPro" id="IPR044878">
    <property type="entry name" value="UbiA_sf"/>
</dbReference>
<dbReference type="NCBIfam" id="TIGR01473">
    <property type="entry name" value="cyoE_ctaB"/>
    <property type="match status" value="1"/>
</dbReference>
<dbReference type="NCBIfam" id="NF003348">
    <property type="entry name" value="PRK04375.1-1"/>
    <property type="match status" value="1"/>
</dbReference>
<dbReference type="PANTHER" id="PTHR43448">
    <property type="entry name" value="PROTOHEME IX FARNESYLTRANSFERASE, MITOCHONDRIAL"/>
    <property type="match status" value="1"/>
</dbReference>
<dbReference type="PANTHER" id="PTHR43448:SF2">
    <property type="entry name" value="PROTOHEME IX FARNESYLTRANSFERASE, MITOCHONDRIAL"/>
    <property type="match status" value="1"/>
</dbReference>
<dbReference type="Pfam" id="PF01040">
    <property type="entry name" value="UbiA"/>
    <property type="match status" value="1"/>
</dbReference>
<dbReference type="PROSITE" id="PS00943">
    <property type="entry name" value="UBIA"/>
    <property type="match status" value="1"/>
</dbReference>
<sequence length="292" mass="32719">MLKKYLFLTKPGILFGNFITTLGGFFLAAQGSIDILLLLLTLIGTTLVVASGCVVNNVIDQDIDTKMQRTQNRALVKKTISPTVALVYAFVLGVMGFSILWFGVNGYAFLFAMIGFIVYVGFYSLWTKRTSIHQTVIGSISGASPPVIGYTAVTHQFDVAALLLFLAYALWQMPHSWAIAIYRFDDYKNAGIPILPVARSIYRTKIECVIYILLFAAVLNGLYCFGYTNVFFLITFNALTAYWFYLSIIGFKAENDQLWAKRFFLYSVILITLLSLSFSFTYQSPAPNLPLF</sequence>
<protein>
    <recommendedName>
        <fullName evidence="1">Protoheme IX farnesyltransferase</fullName>
        <ecNumber evidence="1">2.5.1.141</ecNumber>
    </recommendedName>
    <alternativeName>
        <fullName evidence="1">Heme B farnesyltransferase</fullName>
    </alternativeName>
    <alternativeName>
        <fullName evidence="1">Heme O synthase</fullName>
    </alternativeName>
</protein>
<comment type="function">
    <text evidence="1">Converts heme B (protoheme IX) to heme O by substitution of the vinyl group on carbon 2 of heme B porphyrin ring with a hydroxyethyl farnesyl side group.</text>
</comment>
<comment type="catalytic activity">
    <reaction evidence="1">
        <text>heme b + (2E,6E)-farnesyl diphosphate + H2O = Fe(II)-heme o + diphosphate</text>
        <dbReference type="Rhea" id="RHEA:28070"/>
        <dbReference type="ChEBI" id="CHEBI:15377"/>
        <dbReference type="ChEBI" id="CHEBI:33019"/>
        <dbReference type="ChEBI" id="CHEBI:60344"/>
        <dbReference type="ChEBI" id="CHEBI:60530"/>
        <dbReference type="ChEBI" id="CHEBI:175763"/>
        <dbReference type="EC" id="2.5.1.141"/>
    </reaction>
</comment>
<comment type="pathway">
    <text evidence="1">Porphyrin-containing compound metabolism; heme O biosynthesis; heme O from protoheme: step 1/1.</text>
</comment>
<comment type="subcellular location">
    <subcellularLocation>
        <location evidence="1">Cell inner membrane</location>
        <topology evidence="1">Multi-pass membrane protein</topology>
    </subcellularLocation>
</comment>
<comment type="miscellaneous">
    <text evidence="1">Carbon 2 of the heme B porphyrin ring is defined according to the Fischer nomenclature.</text>
</comment>
<comment type="similarity">
    <text evidence="1">Belongs to the UbiA prenyltransferase family. Protoheme IX farnesyltransferase subfamily.</text>
</comment>
<keyword id="KW-0997">Cell inner membrane</keyword>
<keyword id="KW-1003">Cell membrane</keyword>
<keyword id="KW-0350">Heme biosynthesis</keyword>
<keyword id="KW-0472">Membrane</keyword>
<keyword id="KW-0808">Transferase</keyword>
<keyword id="KW-0812">Transmembrane</keyword>
<keyword id="KW-1133">Transmembrane helix</keyword>
<name>CYOE_ACIBS</name>
<accession>B0VM11</accession>
<reference key="1">
    <citation type="journal article" date="2008" name="PLoS ONE">
        <title>Comparative analysis of Acinetobacters: three genomes for three lifestyles.</title>
        <authorList>
            <person name="Vallenet D."/>
            <person name="Nordmann P."/>
            <person name="Barbe V."/>
            <person name="Poirel L."/>
            <person name="Mangenot S."/>
            <person name="Bataille E."/>
            <person name="Dossat C."/>
            <person name="Gas S."/>
            <person name="Kreimeyer A."/>
            <person name="Lenoble P."/>
            <person name="Oztas S."/>
            <person name="Poulain J."/>
            <person name="Segurens B."/>
            <person name="Robert C."/>
            <person name="Abergel C."/>
            <person name="Claverie J.-M."/>
            <person name="Raoult D."/>
            <person name="Medigue C."/>
            <person name="Weissenbach J."/>
            <person name="Cruveiller S."/>
        </authorList>
    </citation>
    <scope>NUCLEOTIDE SEQUENCE [LARGE SCALE GENOMIC DNA]</scope>
    <source>
        <strain>SDF</strain>
    </source>
</reference>
<evidence type="ECO:0000255" key="1">
    <source>
        <dbReference type="HAMAP-Rule" id="MF_00154"/>
    </source>
</evidence>